<organism>
    <name type="scientific">Tibrogargan virus (strain CS132)</name>
    <name type="common">TIBV</name>
    <dbReference type="NCBI Taxonomy" id="1559361"/>
    <lineage>
        <taxon>Viruses</taxon>
        <taxon>Riboviria</taxon>
        <taxon>Orthornavirae</taxon>
        <taxon>Negarnaviricota</taxon>
        <taxon>Haploviricotina</taxon>
        <taxon>Monjiviricetes</taxon>
        <taxon>Mononegavirales</taxon>
        <taxon>Rhabdoviridae</taxon>
        <taxon>Alpharhabdovirinae</taxon>
        <taxon>Tibrovirus</taxon>
        <taxon>Tibrovirus tibrogargan</taxon>
    </lineage>
</organism>
<sequence length="109" mass="12878">MSKVGPNPFLQFYLNAKNDFINWVSIIWGKIRMIALVITLIVAFIFLIKLIKSCIYLVSLCKGCLTKTLTFKNKIIKWNIWKKIKRRTPRESRLKDCPIYLNNPNFQLN</sequence>
<proteinExistence type="inferred from homology"/>
<evidence type="ECO:0000305" key="1">
    <source>
    </source>
</evidence>
<comment type="similarity">
    <text evidence="1">Belongs to the tibrovirus protein U3 family.</text>
</comment>
<reference key="1">
    <citation type="journal article" date="2011" name="J. Gen. Virol.">
        <title>Tibrogargan and Coastal Plains rhabdoviruses: genomic characterization, evolution of novel genes and seroprevalence in Australian livestock.</title>
        <authorList>
            <person name="Gubala A."/>
            <person name="Davis S."/>
            <person name="Weir R."/>
            <person name="Melville L."/>
            <person name="Cowled C."/>
            <person name="Boyle D."/>
        </authorList>
    </citation>
    <scope>NUCLEOTIDE SEQUENCE [GENOMIC RNA]</scope>
    <source>
        <strain>CS132</strain>
    </source>
</reference>
<accession>D8V077</accession>
<feature type="chain" id="PRO_0000432058" description="Protein U3">
    <location>
        <begin position="1"/>
        <end position="109"/>
    </location>
</feature>
<name>U3_TIBVC</name>
<organismHost>
    <name type="scientific">Bos taurus</name>
    <name type="common">Bovine</name>
    <dbReference type="NCBI Taxonomy" id="9913"/>
</organismHost>
<organismHost>
    <name type="scientific">Culicoides brevitarsis</name>
    <dbReference type="NCBI Taxonomy" id="469753"/>
</organismHost>
<protein>
    <recommendedName>
        <fullName>Protein U3</fullName>
    </recommendedName>
</protein>
<gene>
    <name type="primary">U3</name>
</gene>
<keyword id="KW-1185">Reference proteome</keyword>
<dbReference type="EMBL" id="GQ294472">
    <property type="protein sequence ID" value="ADG86354.1"/>
    <property type="molecule type" value="Viral_cRNA"/>
</dbReference>
<dbReference type="RefSeq" id="YP_007641375.1">
    <property type="nucleotide sequence ID" value="NC_020804.1"/>
</dbReference>
<dbReference type="SMR" id="D8V077"/>
<dbReference type="TCDB" id="1.A.95.2.4">
    <property type="family name" value="the ephemerovirus viroporin (evvp) family"/>
</dbReference>
<dbReference type="GeneID" id="14857904"/>
<dbReference type="KEGG" id="vg:14857904"/>
<dbReference type="Proteomes" id="UP000029770">
    <property type="component" value="Segment"/>
</dbReference>